<name>P20D1_ASPOR</name>
<evidence type="ECO:0000250" key="1"/>
<evidence type="ECO:0000255" key="2"/>
<evidence type="ECO:0000305" key="3"/>
<gene>
    <name type="ORF">AO090166000075</name>
</gene>
<dbReference type="EC" id="3.4.17.-"/>
<dbReference type="EMBL" id="BA000052">
    <property type="protein sequence ID" value="BAE61726.1"/>
    <property type="molecule type" value="Genomic_DNA"/>
</dbReference>
<dbReference type="RefSeq" id="XP_001822859.1">
    <property type="nucleotide sequence ID" value="XM_001822807.3"/>
</dbReference>
<dbReference type="SMR" id="Q2U9N9"/>
<dbReference type="STRING" id="510516.Q2U9N9"/>
<dbReference type="EnsemblFungi" id="BAE61726">
    <property type="protein sequence ID" value="BAE61726"/>
    <property type="gene ID" value="AO090166000075"/>
</dbReference>
<dbReference type="GeneID" id="5994915"/>
<dbReference type="KEGG" id="aor:AO090166000075"/>
<dbReference type="VEuPathDB" id="FungiDB:AO090166000075"/>
<dbReference type="HOGENOM" id="CLU_021802_3_0_1"/>
<dbReference type="OMA" id="HDEEIGC"/>
<dbReference type="OrthoDB" id="96220at5052"/>
<dbReference type="Proteomes" id="UP000006564">
    <property type="component" value="Chromosome 4"/>
</dbReference>
<dbReference type="GO" id="GO:0005576">
    <property type="term" value="C:extracellular region"/>
    <property type="evidence" value="ECO:0007669"/>
    <property type="project" value="UniProtKB-SubCell"/>
</dbReference>
<dbReference type="GO" id="GO:0046872">
    <property type="term" value="F:metal ion binding"/>
    <property type="evidence" value="ECO:0007669"/>
    <property type="project" value="UniProtKB-KW"/>
</dbReference>
<dbReference type="GO" id="GO:0008233">
    <property type="term" value="F:peptidase activity"/>
    <property type="evidence" value="ECO:0007669"/>
    <property type="project" value="UniProtKB-KW"/>
</dbReference>
<dbReference type="GO" id="GO:0006508">
    <property type="term" value="P:proteolysis"/>
    <property type="evidence" value="ECO:0007669"/>
    <property type="project" value="UniProtKB-KW"/>
</dbReference>
<dbReference type="CDD" id="cd05652">
    <property type="entry name" value="M20_ArgE_DapE-like_fungal"/>
    <property type="match status" value="1"/>
</dbReference>
<dbReference type="Gene3D" id="3.30.70.360">
    <property type="match status" value="1"/>
</dbReference>
<dbReference type="Gene3D" id="3.40.630.10">
    <property type="entry name" value="Zn peptidases"/>
    <property type="match status" value="1"/>
</dbReference>
<dbReference type="InterPro" id="IPR001261">
    <property type="entry name" value="ArgE/DapE_CS"/>
</dbReference>
<dbReference type="InterPro" id="IPR036264">
    <property type="entry name" value="Bact_exopeptidase_dim_dom"/>
</dbReference>
<dbReference type="InterPro" id="IPR002933">
    <property type="entry name" value="Peptidase_M20"/>
</dbReference>
<dbReference type="InterPro" id="IPR011650">
    <property type="entry name" value="Peptidase_M20_dimer"/>
</dbReference>
<dbReference type="InterPro" id="IPR050072">
    <property type="entry name" value="Peptidase_M20A"/>
</dbReference>
<dbReference type="PANTHER" id="PTHR43808">
    <property type="entry name" value="ACETYLORNITHINE DEACETYLASE"/>
    <property type="match status" value="1"/>
</dbReference>
<dbReference type="PANTHER" id="PTHR43808:SF8">
    <property type="entry name" value="PEPTIDASE M20 DIMERISATION DOMAIN-CONTAINING PROTEIN"/>
    <property type="match status" value="1"/>
</dbReference>
<dbReference type="Pfam" id="PF07687">
    <property type="entry name" value="M20_dimer"/>
    <property type="match status" value="1"/>
</dbReference>
<dbReference type="Pfam" id="PF01546">
    <property type="entry name" value="Peptidase_M20"/>
    <property type="match status" value="1"/>
</dbReference>
<dbReference type="SUPFAM" id="SSF55031">
    <property type="entry name" value="Bacterial exopeptidase dimerisation domain"/>
    <property type="match status" value="1"/>
</dbReference>
<dbReference type="SUPFAM" id="SSF53187">
    <property type="entry name" value="Zn-dependent exopeptidases"/>
    <property type="match status" value="1"/>
</dbReference>
<dbReference type="PROSITE" id="PS00758">
    <property type="entry name" value="ARGE_DAPE_CPG2_1"/>
    <property type="match status" value="1"/>
</dbReference>
<dbReference type="PROSITE" id="PS00759">
    <property type="entry name" value="ARGE_DAPE_CPG2_2"/>
    <property type="match status" value="1"/>
</dbReference>
<sequence>MKATDLFHVTALVAGALALEHQQPLIGDLSQDLNHIIDSSPLLSFHRALVQIPSISEHEKNVGEYVLDFLSSQNLTVEKQIVTPESDTEEERFNIYAYVGKNRQPDVLVTSHIDTVPPFIPYSLHAPTSGTSFIRTDLVIAGRGTVDAKASVAAIVFAALETLDENPNASIGLLFDVGEENSGVGMKHFSNSELNPTPPTYHTVIFGEPTELSLVAAHKGTLGFKLVAEGKAAHSGYPWLGESAISSLIPVLAHLDTLQDLPPEKGGLLRSETLGKSTLNIGRVHGGIAANVVPAHAEAAISVRLAAGTPEDTRTIIERAVAKVTSGDRSVYPDFGDRKAGAPPQYFDVDVDGFEVITVNYGTDAPALKIHDQRTQRVKRYLYGPGSILVAHADNEAITVGELEEAVRGYKRLIAASL</sequence>
<organism>
    <name type="scientific">Aspergillus oryzae (strain ATCC 42149 / RIB 40)</name>
    <name type="common">Yellow koji mold</name>
    <dbReference type="NCBI Taxonomy" id="510516"/>
    <lineage>
        <taxon>Eukaryota</taxon>
        <taxon>Fungi</taxon>
        <taxon>Dikarya</taxon>
        <taxon>Ascomycota</taxon>
        <taxon>Pezizomycotina</taxon>
        <taxon>Eurotiomycetes</taxon>
        <taxon>Eurotiomycetidae</taxon>
        <taxon>Eurotiales</taxon>
        <taxon>Aspergillaceae</taxon>
        <taxon>Aspergillus</taxon>
        <taxon>Aspergillus subgen. Circumdati</taxon>
    </lineage>
</organism>
<reference key="1">
    <citation type="journal article" date="2005" name="Nature">
        <title>Genome sequencing and analysis of Aspergillus oryzae.</title>
        <authorList>
            <person name="Machida M."/>
            <person name="Asai K."/>
            <person name="Sano M."/>
            <person name="Tanaka T."/>
            <person name="Kumagai T."/>
            <person name="Terai G."/>
            <person name="Kusumoto K."/>
            <person name="Arima T."/>
            <person name="Akita O."/>
            <person name="Kashiwagi Y."/>
            <person name="Abe K."/>
            <person name="Gomi K."/>
            <person name="Horiuchi H."/>
            <person name="Kitamoto K."/>
            <person name="Kobayashi T."/>
            <person name="Takeuchi M."/>
            <person name="Denning D.W."/>
            <person name="Galagan J.E."/>
            <person name="Nierman W.C."/>
            <person name="Yu J."/>
            <person name="Archer D.B."/>
            <person name="Bennett J.W."/>
            <person name="Bhatnagar D."/>
            <person name="Cleveland T.E."/>
            <person name="Fedorova N.D."/>
            <person name="Gotoh O."/>
            <person name="Horikawa H."/>
            <person name="Hosoyama A."/>
            <person name="Ichinomiya M."/>
            <person name="Igarashi R."/>
            <person name="Iwashita K."/>
            <person name="Juvvadi P.R."/>
            <person name="Kato M."/>
            <person name="Kato Y."/>
            <person name="Kin T."/>
            <person name="Kokubun A."/>
            <person name="Maeda H."/>
            <person name="Maeyama N."/>
            <person name="Maruyama J."/>
            <person name="Nagasaki H."/>
            <person name="Nakajima T."/>
            <person name="Oda K."/>
            <person name="Okada K."/>
            <person name="Paulsen I."/>
            <person name="Sakamoto K."/>
            <person name="Sawano T."/>
            <person name="Takahashi M."/>
            <person name="Takase K."/>
            <person name="Terabayashi Y."/>
            <person name="Wortman J.R."/>
            <person name="Yamada O."/>
            <person name="Yamagata Y."/>
            <person name="Anazawa H."/>
            <person name="Hata Y."/>
            <person name="Koide Y."/>
            <person name="Komori T."/>
            <person name="Koyama Y."/>
            <person name="Minetoki T."/>
            <person name="Suharnan S."/>
            <person name="Tanaka A."/>
            <person name="Isono K."/>
            <person name="Kuhara S."/>
            <person name="Ogasawara N."/>
            <person name="Kikuchi H."/>
        </authorList>
    </citation>
    <scope>NUCLEOTIDE SEQUENCE [LARGE SCALE GENOMIC DNA]</scope>
    <source>
        <strain>ATCC 42149 / RIB 40</strain>
    </source>
</reference>
<feature type="signal peptide" evidence="2">
    <location>
        <begin position="1"/>
        <end position="18"/>
    </location>
</feature>
<feature type="chain" id="PRO_0000411231" description="Probable carboxypeptidase AO090166000075">
    <location>
        <begin position="19"/>
        <end position="418"/>
    </location>
</feature>
<feature type="active site" description="Proton acceptor" evidence="1">
    <location>
        <position position="179"/>
    </location>
</feature>
<feature type="binding site" evidence="1">
    <location>
        <position position="147"/>
    </location>
    <ligand>
        <name>Zn(2+)</name>
        <dbReference type="ChEBI" id="CHEBI:29105"/>
        <label>1</label>
    </ligand>
</feature>
<feature type="binding site" evidence="1">
    <location>
        <position position="147"/>
    </location>
    <ligand>
        <name>Zn(2+)</name>
        <dbReference type="ChEBI" id="CHEBI:29105"/>
        <label>2</label>
    </ligand>
</feature>
<feature type="binding site" evidence="1">
    <location>
        <position position="180"/>
    </location>
    <ligand>
        <name>Zn(2+)</name>
        <dbReference type="ChEBI" id="CHEBI:29105"/>
        <label>1</label>
    </ligand>
</feature>
<feature type="glycosylation site" description="N-linked (GlcNAc...) asparagine" evidence="2">
    <location>
        <position position="74"/>
    </location>
</feature>
<feature type="glycosylation site" description="N-linked (GlcNAc...) asparagine" evidence="2">
    <location>
        <position position="168"/>
    </location>
</feature>
<accession>Q2U9N9</accession>
<keyword id="KW-0325">Glycoprotein</keyword>
<keyword id="KW-0378">Hydrolase</keyword>
<keyword id="KW-0479">Metal-binding</keyword>
<keyword id="KW-0645">Protease</keyword>
<keyword id="KW-1185">Reference proteome</keyword>
<keyword id="KW-0964">Secreted</keyword>
<keyword id="KW-0732">Signal</keyword>
<keyword id="KW-0862">Zinc</keyword>
<comment type="cofactor">
    <cofactor evidence="1">
        <name>Zn(2+)</name>
        <dbReference type="ChEBI" id="CHEBI:29105"/>
    </cofactor>
    <text evidence="1">Binds 2 Zn(2+) ions per subunit.</text>
</comment>
<comment type="subcellular location">
    <subcellularLocation>
        <location evidence="3">Secreted</location>
    </subcellularLocation>
</comment>
<comment type="similarity">
    <text evidence="3">Belongs to the peptidase M20A family.</text>
</comment>
<protein>
    <recommendedName>
        <fullName>Probable carboxypeptidase AO090166000075</fullName>
        <ecNumber>3.4.17.-</ecNumber>
    </recommendedName>
    <alternativeName>
        <fullName>Peptidase M20 domain-containing protein AO090166000075</fullName>
    </alternativeName>
</protein>
<proteinExistence type="inferred from homology"/>